<dbReference type="EMBL" id="CP001034">
    <property type="protein sequence ID" value="ACB86475.1"/>
    <property type="molecule type" value="Genomic_DNA"/>
</dbReference>
<dbReference type="RefSeq" id="WP_012449307.1">
    <property type="nucleotide sequence ID" value="NC_010718.1"/>
</dbReference>
<dbReference type="SMR" id="B2A469"/>
<dbReference type="FunCoup" id="B2A469">
    <property type="interactions" value="437"/>
</dbReference>
<dbReference type="STRING" id="457570.Nther_2929"/>
<dbReference type="KEGG" id="nth:Nther_2929"/>
<dbReference type="eggNOG" id="COG0445">
    <property type="taxonomic scope" value="Bacteria"/>
</dbReference>
<dbReference type="HOGENOM" id="CLU_007831_2_2_9"/>
<dbReference type="InParanoid" id="B2A469"/>
<dbReference type="OrthoDB" id="9815560at2"/>
<dbReference type="Proteomes" id="UP000001683">
    <property type="component" value="Chromosome"/>
</dbReference>
<dbReference type="GO" id="GO:0005829">
    <property type="term" value="C:cytosol"/>
    <property type="evidence" value="ECO:0007669"/>
    <property type="project" value="TreeGrafter"/>
</dbReference>
<dbReference type="GO" id="GO:0050660">
    <property type="term" value="F:flavin adenine dinucleotide binding"/>
    <property type="evidence" value="ECO:0007669"/>
    <property type="project" value="UniProtKB-UniRule"/>
</dbReference>
<dbReference type="GO" id="GO:0030488">
    <property type="term" value="P:tRNA methylation"/>
    <property type="evidence" value="ECO:0007669"/>
    <property type="project" value="TreeGrafter"/>
</dbReference>
<dbReference type="GO" id="GO:0002098">
    <property type="term" value="P:tRNA wobble uridine modification"/>
    <property type="evidence" value="ECO:0007669"/>
    <property type="project" value="InterPro"/>
</dbReference>
<dbReference type="FunFam" id="1.10.10.1800:FF:000001">
    <property type="entry name" value="tRNA uridine 5-carboxymethylaminomethyl modification enzyme MnmG"/>
    <property type="match status" value="1"/>
</dbReference>
<dbReference type="FunFam" id="1.10.150.570:FF:000001">
    <property type="entry name" value="tRNA uridine 5-carboxymethylaminomethyl modification enzyme MnmG"/>
    <property type="match status" value="1"/>
</dbReference>
<dbReference type="FunFam" id="3.50.50.60:FF:000002">
    <property type="entry name" value="tRNA uridine 5-carboxymethylaminomethyl modification enzyme MnmG"/>
    <property type="match status" value="1"/>
</dbReference>
<dbReference type="Gene3D" id="3.50.50.60">
    <property type="entry name" value="FAD/NAD(P)-binding domain"/>
    <property type="match status" value="2"/>
</dbReference>
<dbReference type="Gene3D" id="1.10.150.570">
    <property type="entry name" value="GidA associated domain, C-terminal subdomain"/>
    <property type="match status" value="1"/>
</dbReference>
<dbReference type="Gene3D" id="1.10.10.1800">
    <property type="entry name" value="tRNA uridine 5-carboxymethylaminomethyl modification enzyme MnmG/GidA"/>
    <property type="match status" value="1"/>
</dbReference>
<dbReference type="HAMAP" id="MF_00129">
    <property type="entry name" value="MnmG_GidA"/>
    <property type="match status" value="1"/>
</dbReference>
<dbReference type="InterPro" id="IPR036188">
    <property type="entry name" value="FAD/NAD-bd_sf"/>
</dbReference>
<dbReference type="InterPro" id="IPR049312">
    <property type="entry name" value="GIDA_C_N"/>
</dbReference>
<dbReference type="InterPro" id="IPR004416">
    <property type="entry name" value="MnmG"/>
</dbReference>
<dbReference type="InterPro" id="IPR002218">
    <property type="entry name" value="MnmG-rel"/>
</dbReference>
<dbReference type="InterPro" id="IPR020595">
    <property type="entry name" value="MnmG-rel_CS"/>
</dbReference>
<dbReference type="InterPro" id="IPR026904">
    <property type="entry name" value="MnmG_C"/>
</dbReference>
<dbReference type="InterPro" id="IPR047001">
    <property type="entry name" value="MnmG_C_subdom"/>
</dbReference>
<dbReference type="InterPro" id="IPR044920">
    <property type="entry name" value="MnmG_C_subdom_sf"/>
</dbReference>
<dbReference type="InterPro" id="IPR040131">
    <property type="entry name" value="MnmG_N"/>
</dbReference>
<dbReference type="NCBIfam" id="TIGR00136">
    <property type="entry name" value="mnmG_gidA"/>
    <property type="match status" value="1"/>
</dbReference>
<dbReference type="PANTHER" id="PTHR11806">
    <property type="entry name" value="GLUCOSE INHIBITED DIVISION PROTEIN A"/>
    <property type="match status" value="1"/>
</dbReference>
<dbReference type="PANTHER" id="PTHR11806:SF0">
    <property type="entry name" value="PROTEIN MTO1 HOMOLOG, MITOCHONDRIAL"/>
    <property type="match status" value="1"/>
</dbReference>
<dbReference type="Pfam" id="PF01134">
    <property type="entry name" value="GIDA"/>
    <property type="match status" value="1"/>
</dbReference>
<dbReference type="Pfam" id="PF21680">
    <property type="entry name" value="GIDA_C_1st"/>
    <property type="match status" value="1"/>
</dbReference>
<dbReference type="Pfam" id="PF13932">
    <property type="entry name" value="SAM_GIDA_C"/>
    <property type="match status" value="1"/>
</dbReference>
<dbReference type="SMART" id="SM01228">
    <property type="entry name" value="GIDA_assoc_3"/>
    <property type="match status" value="1"/>
</dbReference>
<dbReference type="SUPFAM" id="SSF51905">
    <property type="entry name" value="FAD/NAD(P)-binding domain"/>
    <property type="match status" value="1"/>
</dbReference>
<dbReference type="PROSITE" id="PS01280">
    <property type="entry name" value="GIDA_1"/>
    <property type="match status" value="1"/>
</dbReference>
<dbReference type="PROSITE" id="PS01281">
    <property type="entry name" value="GIDA_2"/>
    <property type="match status" value="1"/>
</dbReference>
<gene>
    <name evidence="1" type="primary">mnmG</name>
    <name evidence="1" type="synonym">gidA</name>
    <name type="ordered locus">Nther_2929</name>
</gene>
<organism>
    <name type="scientific">Natranaerobius thermophilus (strain ATCC BAA-1301 / DSM 18059 / JW/NM-WN-LF)</name>
    <dbReference type="NCBI Taxonomy" id="457570"/>
    <lineage>
        <taxon>Bacteria</taxon>
        <taxon>Bacillati</taxon>
        <taxon>Bacillota</taxon>
        <taxon>Clostridia</taxon>
        <taxon>Natranaerobiales</taxon>
        <taxon>Natranaerobiaceae</taxon>
        <taxon>Natranaerobius</taxon>
    </lineage>
</organism>
<accession>B2A469</accession>
<keyword id="KW-0963">Cytoplasm</keyword>
<keyword id="KW-0274">FAD</keyword>
<keyword id="KW-0285">Flavoprotein</keyword>
<keyword id="KW-0520">NAD</keyword>
<keyword id="KW-1185">Reference proteome</keyword>
<keyword id="KW-0819">tRNA processing</keyword>
<proteinExistence type="inferred from homology"/>
<evidence type="ECO:0000255" key="1">
    <source>
        <dbReference type="HAMAP-Rule" id="MF_00129"/>
    </source>
</evidence>
<evidence type="ECO:0000256" key="2">
    <source>
        <dbReference type="SAM" id="MobiDB-lite"/>
    </source>
</evidence>
<sequence>MAYYGGNYDLIVVGAGHAGCEAALAGARIGAKTLLLTLNLDQIALMPCNPAIGGPAKSHIVREVDALGGEMGKNIDDTAIQFRMLNTRKGPAVQALRAQADKIKYQERMKYILENEENLLLKQETVNQLMIEDNQIKGVVTKDGTYYYCEQLVITSGTYLKGRIIVGDVDYSGGPNGQQAAYGLSEDFKQHGISLMRFKTGTPARVYRKSLNFDEMEIQHGDDYPWRFSFYHSSERLKQLPCYLTFTNYETHKIINDSLSRSPLYSGRIEGTGPRYCPSIEDKIVRFPDKSRHQLFLEPEGLNTQEYYVQGMSTSLPLDVQERMLRTIPGLEEVEIMRPGYAIEYDCIDPTQLELTLEHKQISGLFFAGQINGTSGYEEAAGQGILAGINAAQKIQGKEPVIIKRSQGYIGVLIDDLVTKGTQEPYRMLTSRAEYRLILRQDNADLRLTELGYQVGLIKEGNYQKFKEKLEKIESEKERLKSIKLTPNKNVQNFMEEHNTSGLKKPTTLFHILKRPEISYEALEYFDETRPDLPLEVTEQIEIQIKYEGYIDKQVEQVQRFEKLEARLIPDDIDYSQISGLSIEAREKLQTYRPRSVGQANRISGIDPSDISVLMVYLEQLKQRADRNQASHDDSNTETGENDD</sequence>
<name>MNMG_NATTJ</name>
<comment type="function">
    <text evidence="1">NAD-binding protein involved in the addition of a carboxymethylaminomethyl (cmnm) group at the wobble position (U34) of certain tRNAs, forming tRNA-cmnm(5)s(2)U34.</text>
</comment>
<comment type="cofactor">
    <cofactor evidence="1">
        <name>FAD</name>
        <dbReference type="ChEBI" id="CHEBI:57692"/>
    </cofactor>
</comment>
<comment type="subunit">
    <text evidence="1">Homodimer. Heterotetramer of two MnmE and two MnmG subunits.</text>
</comment>
<comment type="subcellular location">
    <subcellularLocation>
        <location evidence="1">Cytoplasm</location>
    </subcellularLocation>
</comment>
<comment type="similarity">
    <text evidence="1">Belongs to the MnmG family.</text>
</comment>
<reference key="1">
    <citation type="submission" date="2008-04" db="EMBL/GenBank/DDBJ databases">
        <title>Complete sequence of chromosome of Natranaerobius thermophilus JW/NM-WN-LF.</title>
        <authorList>
            <consortium name="US DOE Joint Genome Institute"/>
            <person name="Copeland A."/>
            <person name="Lucas S."/>
            <person name="Lapidus A."/>
            <person name="Glavina del Rio T."/>
            <person name="Dalin E."/>
            <person name="Tice H."/>
            <person name="Bruce D."/>
            <person name="Goodwin L."/>
            <person name="Pitluck S."/>
            <person name="Chertkov O."/>
            <person name="Brettin T."/>
            <person name="Detter J.C."/>
            <person name="Han C."/>
            <person name="Kuske C.R."/>
            <person name="Schmutz J."/>
            <person name="Larimer F."/>
            <person name="Land M."/>
            <person name="Hauser L."/>
            <person name="Kyrpides N."/>
            <person name="Lykidis A."/>
            <person name="Mesbah N.M."/>
            <person name="Wiegel J."/>
        </authorList>
    </citation>
    <scope>NUCLEOTIDE SEQUENCE [LARGE SCALE GENOMIC DNA]</scope>
    <source>
        <strain>ATCC BAA-1301 / DSM 18059 / JW/NM-WN-LF</strain>
    </source>
</reference>
<feature type="chain" id="PRO_0000345304" description="tRNA uridine 5-carboxymethylaminomethyl modification enzyme MnmG">
    <location>
        <begin position="1"/>
        <end position="644"/>
    </location>
</feature>
<feature type="region of interest" description="Disordered" evidence="2">
    <location>
        <begin position="625"/>
        <end position="644"/>
    </location>
</feature>
<feature type="compositionally biased region" description="Basic and acidic residues" evidence="2">
    <location>
        <begin position="625"/>
        <end position="635"/>
    </location>
</feature>
<feature type="binding site" evidence="1">
    <location>
        <begin position="14"/>
        <end position="19"/>
    </location>
    <ligand>
        <name>FAD</name>
        <dbReference type="ChEBI" id="CHEBI:57692"/>
    </ligand>
</feature>
<feature type="binding site" evidence="1">
    <location>
        <begin position="273"/>
        <end position="287"/>
    </location>
    <ligand>
        <name>NAD(+)</name>
        <dbReference type="ChEBI" id="CHEBI:57540"/>
    </ligand>
</feature>
<protein>
    <recommendedName>
        <fullName evidence="1">tRNA uridine 5-carboxymethylaminomethyl modification enzyme MnmG</fullName>
    </recommendedName>
    <alternativeName>
        <fullName evidence="1">Glucose-inhibited division protein A</fullName>
    </alternativeName>
</protein>